<keyword id="KW-1167">Clathrin- and caveolin-independent endocytosis of virus by host</keyword>
<keyword id="KW-1165">Clathrin-mediated endocytosis of virus by host</keyword>
<keyword id="KW-1015">Disulfide bond</keyword>
<keyword id="KW-1170">Fusion of virus membrane with host endosomal membrane</keyword>
<keyword id="KW-1168">Fusion of virus membrane with host membrane</keyword>
<keyword id="KW-0325">Glycoprotein</keyword>
<keyword id="KW-0348">Hemagglutinin</keyword>
<keyword id="KW-1032">Host cell membrane</keyword>
<keyword id="KW-1043">Host membrane</keyword>
<keyword id="KW-0945">Host-virus interaction</keyword>
<keyword id="KW-0449">Lipoprotein</keyword>
<keyword id="KW-0472">Membrane</keyword>
<keyword id="KW-0564">Palmitate</keyword>
<keyword id="KW-0732">Signal</keyword>
<keyword id="KW-0812">Transmembrane</keyword>
<keyword id="KW-1133">Transmembrane helix</keyword>
<keyword id="KW-1161">Viral attachment to host cell</keyword>
<keyword id="KW-0261">Viral envelope protein</keyword>
<keyword id="KW-1162">Viral penetration into host cytoplasm</keyword>
<keyword id="KW-0946">Virion</keyword>
<keyword id="KW-1164">Virus endocytosis by host</keyword>
<keyword id="KW-1160">Virus entry into host cell</keyword>
<accession>P03454</accession>
<evidence type="ECO:0000250" key="1">
    <source>
        <dbReference type="UniProtKB" id="Q289M7"/>
    </source>
</evidence>
<evidence type="ECO:0000255" key="2">
    <source>
        <dbReference type="HAMAP-Rule" id="MF_04072"/>
    </source>
</evidence>
<evidence type="ECO:0000269" key="3">
    <source>
    </source>
</evidence>
<evidence type="ECO:0000269" key="4">
    <source>
    </source>
</evidence>
<evidence type="ECO:0000305" key="5"/>
<gene>
    <name evidence="2" type="primary">HA</name>
</gene>
<organism>
    <name type="scientific">Influenza A virus (strain A/Wilson-Smith/1933 H1N1)</name>
    <name type="common">Influenza A virus (strain A/WS/1933 H1N1)</name>
    <dbReference type="NCBI Taxonomy" id="381518"/>
    <lineage>
        <taxon>Viruses</taxon>
        <taxon>Riboviria</taxon>
        <taxon>Orthornavirae</taxon>
        <taxon>Negarnaviricota</taxon>
        <taxon>Polyploviricotina</taxon>
        <taxon>Insthoviricetes</taxon>
        <taxon>Articulavirales</taxon>
        <taxon>Orthomyxoviridae</taxon>
        <taxon>Alphainfluenzavirus</taxon>
        <taxon>Alphainfluenzavirus influenzae</taxon>
        <taxon>Influenza A virus</taxon>
    </lineage>
</organism>
<comment type="function">
    <text>Binds to sialic acid-containing receptors on the cell surface, bringing about the attachment of the virus particle to the cell. This attachment induces virion internalization of about two third of the virus particles through clathrin-dependent endocytosis and about one third through a clathrin- and caveolin-independent pathway. Plays a major role in the determination of host range restriction and virulence. Class I viral fusion protein. Responsible for penetration of the virus into the cell cytoplasm by mediating the fusion of the membrane of the endocytosed virus particle with the endosomal membrane. Low pH in endosomes induces an irreversible conformational change in HA2, releasing the fusion hydrophobic peptide. Several trimers are required to form a competent fusion pore.</text>
</comment>
<comment type="function">
    <text evidence="2">Binds to sialic acid-containing receptors on the cell surface, bringing about the attachment of the virus particle to the cell. This attachment induces virion internalization either through clathrin-dependent endocytosis or through clathrin- and caveolin-independent pathway. Plays a major role in the determination of host range restriction and virulence. Class I viral fusion protein. Responsible for penetration of the virus into the cell cytoplasm by mediating the fusion of the membrane of the endocytosed virus particle with the endosomal membrane. Low pH in endosomes induces an irreversible conformational change in HA2, releasing the fusion hydrophobic peptide. Several trimers are required to form a competent fusion pore.</text>
</comment>
<comment type="subunit">
    <text evidence="1">Homotrimer of disulfide-linked HA1-HA2. Interacts with human CACNA1C.</text>
</comment>
<comment type="subcellular location">
    <subcellularLocation>
        <location evidence="2">Virion membrane</location>
        <topology evidence="2">Single-pass type I membrane protein</topology>
    </subcellularLocation>
    <subcellularLocation>
        <location evidence="2 3">Host apical cell membrane</location>
        <topology evidence="2 3">Single-pass type I membrane protein</topology>
    </subcellularLocation>
    <text evidence="2">Targeted to the apical plasma membrane in epithelial polarized cells through a signal present in the transmembrane domain. Associated with glycosphingolipid- and cholesterol-enriched detergent-resistant lipid rafts.</text>
</comment>
<comment type="PTM">
    <text evidence="2">Palmitoylated.</text>
</comment>
<comment type="PTM">
    <text evidence="2">In natural infection, inactive HA is matured into HA1 and HA2 outside the cell by one or more trypsin-like, arginine-specific endoprotease secreted by the bronchial epithelial cells. One identified protease that may be involved in this process is secreted in lungs by club cells.</text>
</comment>
<comment type="miscellaneous">
    <text>Major glycoprotein, comprises over 80% of the envelope proteins present in virus particle.</text>
</comment>
<comment type="miscellaneous">
    <text>The extent of infection into host organism is determined by HA. Influenza viruses bud from the apical surface of polarized epithelial cells (e.g. bronchial epithelial cells) into lumen of lungs and are therefore usually pneumotropic. The reason is that HA is cleaved by tryptase clara which is restricted to lungs. However, HAs of H5 and H7 pantropic avian viruses subtypes can be cleaved by furin and subtilisin-type enzymes, allowing the virus to grow in other organs than lungs.</text>
</comment>
<comment type="miscellaneous">
    <text evidence="5">The influenza A genome consist of 8 RNA segments. Genetic variation of hemagglutinin and/or neuraminidase genes results in the emergence of new influenza strains. The mechanism of variation can be the result of point mutations or the result of genetic reassortment between segments of two different strains.</text>
</comment>
<comment type="similarity">
    <text evidence="2">Belongs to the influenza viruses hemagglutinin family.</text>
</comment>
<name>HEMA_I33A0</name>
<feature type="signal peptide" evidence="2">
    <location>
        <begin position="1"/>
        <end position="17"/>
    </location>
</feature>
<feature type="chain" id="PRO_0000440374" description="Hemagglutinin" evidence="2">
    <location>
        <begin position="18"/>
        <end position="565"/>
    </location>
</feature>
<feature type="chain" id="PRO_0000039069" description="Hemagglutinin HA1 chain" evidence="2">
    <location>
        <begin position="18"/>
        <end position="342"/>
    </location>
</feature>
<feature type="chain" id="PRO_0000039070" description="Hemagglutinin HA2 chain" evidence="2">
    <location>
        <begin position="344"/>
        <end position="565"/>
    </location>
</feature>
<feature type="topological domain" description="Extracellular" evidence="2">
    <location>
        <begin position="18"/>
        <end position="528"/>
    </location>
</feature>
<feature type="transmembrane region" description="Helical" evidence="2">
    <location>
        <begin position="529"/>
        <end position="549"/>
    </location>
</feature>
<feature type="topological domain" description="Cytoplasmic" evidence="2">
    <location>
        <begin position="550"/>
        <end position="565"/>
    </location>
</feature>
<feature type="site" description="Cleavage; by host" evidence="2">
    <location>
        <begin position="343"/>
        <end position="344"/>
    </location>
</feature>
<feature type="lipid moiety-binding region" description="S-palmitoyl cysteine; by host" evidence="2">
    <location>
        <position position="554"/>
    </location>
</feature>
<feature type="lipid moiety-binding region" description="S-palmitoyl cysteine; by host" evidence="2">
    <location>
        <position position="561"/>
    </location>
</feature>
<feature type="lipid moiety-binding region" description="S-palmitoyl cysteine; by host" evidence="2">
    <location>
        <position position="564"/>
    </location>
</feature>
<feature type="glycosylation site" description="N-linked (GlcNAc...) asparagine; by host" evidence="2">
    <location>
        <position position="27"/>
    </location>
</feature>
<feature type="glycosylation site" description="N-linked (GlcNAc...) asparagine; by host" evidence="2">
    <location>
        <position position="28"/>
    </location>
</feature>
<feature type="glycosylation site" description="N-linked (GlcNAc...) asparagine; by host" evidence="2">
    <location>
        <position position="73"/>
    </location>
</feature>
<feature type="glycosylation site" description="N-linked (GlcNAc...) asparagine; by host" evidence="2">
    <location>
        <position position="142"/>
    </location>
</feature>
<feature type="glycosylation site" description="N-linked (GlcNAc...) asparagine; by host" evidence="2">
    <location>
        <position position="285"/>
    </location>
</feature>
<feature type="glycosylation site" description="N-linked (GlcNAc...) asparagine; by host" evidence="2">
    <location>
        <position position="497"/>
    </location>
</feature>
<feature type="disulfide bond" description="Interchain (between HA1 and HA2 chains)" evidence="2">
    <location>
        <begin position="21"/>
        <end position="480"/>
    </location>
</feature>
<feature type="disulfide bond" evidence="2">
    <location>
        <begin position="59"/>
        <end position="291"/>
    </location>
</feature>
<feature type="disulfide bond" evidence="2">
    <location>
        <begin position="72"/>
        <end position="84"/>
    </location>
</feature>
<feature type="disulfide bond" evidence="2">
    <location>
        <begin position="107"/>
        <end position="152"/>
    </location>
</feature>
<feature type="disulfide bond" evidence="2">
    <location>
        <begin position="295"/>
        <end position="319"/>
    </location>
</feature>
<feature type="disulfide bond" evidence="2">
    <location>
        <begin position="487"/>
        <end position="491"/>
    </location>
</feature>
<feature type="mutagenesis site" description="60% of proteins are targeted to the basolateral membrane in polarized epithelial cells." evidence="4">
    <original>C</original>
    <variation>Y</variation>
    <location>
        <position position="561"/>
    </location>
</feature>
<organismHost>
    <name type="scientific">Aves</name>
    <dbReference type="NCBI Taxonomy" id="8782"/>
</organismHost>
<organismHost>
    <name type="scientific">Homo sapiens</name>
    <name type="common">Human</name>
    <dbReference type="NCBI Taxonomy" id="9606"/>
</organismHost>
<organismHost>
    <name type="scientific">Sus scrofa</name>
    <name type="common">Pig</name>
    <dbReference type="NCBI Taxonomy" id="9823"/>
</organismHost>
<reference key="1">
    <citation type="journal article" date="1981" name="Virology">
        <title>Complete sequence analysis shows that the hemagglutinins of the H0 and H2 subtypes of human influenza virus are closely related.</title>
        <authorList>
            <person name="Hiti A.L."/>
            <person name="Davis A.R."/>
            <person name="Nayak D.P."/>
        </authorList>
    </citation>
    <scope>NUCLEOTIDE SEQUENCE [GENOMIC RNA]</scope>
</reference>
<reference key="2">
    <citation type="journal article" date="2000" name="J. Virol.">
        <title>Analysis of the transmembrane domain of influenza virus neuraminidase, a type II transmembrane glycoprotein, for apical sorting and raft association.</title>
        <authorList>
            <person name="Barman S."/>
            <person name="Nayak D.P."/>
        </authorList>
    </citation>
    <scope>SUBCELLULAR LOCATION</scope>
</reference>
<reference key="3">
    <citation type="journal article" date="2003" name="Virology">
        <title>Influenza A virus hemagglutinin containing basolateral localization signal does not alter the apical budding of a recombinant influenza A virus in polarized MDCK cells.</title>
        <authorList>
            <person name="Barman S."/>
            <person name="Adhikary L."/>
            <person name="Kawaoka Y."/>
            <person name="Nayak D.P."/>
        </authorList>
    </citation>
    <scope>MUTAGENESIS OF CYS-561</scope>
</reference>
<protein>
    <recommendedName>
        <fullName evidence="2">Hemagglutinin</fullName>
    </recommendedName>
    <component>
        <recommendedName>
            <fullName evidence="2">Hemagglutinin HA1 chain</fullName>
        </recommendedName>
    </component>
    <component>
        <recommendedName>
            <fullName evidence="2">Hemagglutinin HA2 chain</fullName>
        </recommendedName>
    </component>
</protein>
<dbReference type="EMBL" id="J02176">
    <property type="protein sequence ID" value="AAA43209.1"/>
    <property type="molecule type" value="Genomic_RNA"/>
</dbReference>
<dbReference type="SMR" id="P03454"/>
<dbReference type="GlyCosmos" id="P03454">
    <property type="glycosylation" value="6 sites, No reported glycans"/>
</dbReference>
<dbReference type="PRO" id="PR:P03454"/>
<dbReference type="Proteomes" id="UP000000834">
    <property type="component" value="Genome"/>
</dbReference>
<dbReference type="GO" id="GO:0020002">
    <property type="term" value="C:host cell plasma membrane"/>
    <property type="evidence" value="ECO:0007669"/>
    <property type="project" value="UniProtKB-SubCell"/>
</dbReference>
<dbReference type="GO" id="GO:0016020">
    <property type="term" value="C:membrane"/>
    <property type="evidence" value="ECO:0007669"/>
    <property type="project" value="UniProtKB-UniRule"/>
</dbReference>
<dbReference type="GO" id="GO:0019031">
    <property type="term" value="C:viral envelope"/>
    <property type="evidence" value="ECO:0007669"/>
    <property type="project" value="UniProtKB-UniRule"/>
</dbReference>
<dbReference type="GO" id="GO:0055036">
    <property type="term" value="C:virion membrane"/>
    <property type="evidence" value="ECO:0007669"/>
    <property type="project" value="UniProtKB-SubCell"/>
</dbReference>
<dbReference type="GO" id="GO:0046789">
    <property type="term" value="F:host cell surface receptor binding"/>
    <property type="evidence" value="ECO:0007669"/>
    <property type="project" value="UniProtKB-UniRule"/>
</dbReference>
<dbReference type="GO" id="GO:0075512">
    <property type="term" value="P:clathrin-dependent endocytosis of virus by host cell"/>
    <property type="evidence" value="ECO:0007669"/>
    <property type="project" value="UniProtKB-UniRule"/>
</dbReference>
<dbReference type="GO" id="GO:0039654">
    <property type="term" value="P:fusion of virus membrane with host endosome membrane"/>
    <property type="evidence" value="ECO:0007669"/>
    <property type="project" value="UniProtKB-UniRule"/>
</dbReference>
<dbReference type="GO" id="GO:0019064">
    <property type="term" value="P:fusion of virus membrane with host plasma membrane"/>
    <property type="evidence" value="ECO:0007669"/>
    <property type="project" value="InterPro"/>
</dbReference>
<dbReference type="GO" id="GO:0046761">
    <property type="term" value="P:viral budding from plasma membrane"/>
    <property type="evidence" value="ECO:0007669"/>
    <property type="project" value="UniProtKB-UniRule"/>
</dbReference>
<dbReference type="GO" id="GO:0019062">
    <property type="term" value="P:virion attachment to host cell"/>
    <property type="evidence" value="ECO:0007669"/>
    <property type="project" value="UniProtKB-KW"/>
</dbReference>
<dbReference type="FunFam" id="3.90.20.10:FF:000002">
    <property type="entry name" value="Hemagglutinin"/>
    <property type="match status" value="1"/>
</dbReference>
<dbReference type="Gene3D" id="3.90.20.10">
    <property type="match status" value="1"/>
</dbReference>
<dbReference type="Gene3D" id="3.90.209.20">
    <property type="match status" value="1"/>
</dbReference>
<dbReference type="Gene3D" id="2.10.77.10">
    <property type="entry name" value="Hemagglutinin Chain A, Domain 2"/>
    <property type="match status" value="1"/>
</dbReference>
<dbReference type="HAMAP" id="MF_04072">
    <property type="entry name" value="INFV_HEMA"/>
    <property type="match status" value="1"/>
</dbReference>
<dbReference type="InterPro" id="IPR008980">
    <property type="entry name" value="Capsid_hemagglutn"/>
</dbReference>
<dbReference type="InterPro" id="IPR013828">
    <property type="entry name" value="Hemagglutn_HA1_a/b_dom_sf"/>
</dbReference>
<dbReference type="InterPro" id="IPR000149">
    <property type="entry name" value="Hemagglutn_influenz_A"/>
</dbReference>
<dbReference type="InterPro" id="IPR001364">
    <property type="entry name" value="Hemagglutn_influenz_A/B"/>
</dbReference>
<dbReference type="Pfam" id="PF00509">
    <property type="entry name" value="Hemagglutinin"/>
    <property type="match status" value="1"/>
</dbReference>
<dbReference type="PRINTS" id="PR00330">
    <property type="entry name" value="HEMAGGLUTN1"/>
</dbReference>
<dbReference type="PRINTS" id="PR00329">
    <property type="entry name" value="HEMAGGLUTN12"/>
</dbReference>
<dbReference type="SUPFAM" id="SSF58064">
    <property type="entry name" value="Influenza hemagglutinin (stalk)"/>
    <property type="match status" value="1"/>
</dbReference>
<dbReference type="SUPFAM" id="SSF49818">
    <property type="entry name" value="Viral protein domain"/>
    <property type="match status" value="1"/>
</dbReference>
<sequence>MKAKLLVLLYAFVATDADTICIGYHANNSTDTVDTIFEKNVAVTHSVNLLEDRHNGKLCKLKGIAPLQLGKCNITGWLLGNPECDSLLPARSWSYIVETPNSENGACYPGDFIDYEELREQLSSVSSLERFEIFPKESSWPNHTFNGVTVSCSHRGKSSFYRNLLWLTKKGDSYPKLTNSYVNNKGKEVLVLWGVHHPSSSDEQQSLYSNGNAYVSVASSNYNRRFTPEIAARPKVKDQHGRMNYYWTLLEPGDTIIFEATGNLIAPWYAFALSRGFESGIITSNASMHECNTKCQTPQGSINSNLPFQNIHPVTIGECPKYVRSTKLRMVTGLRNIPSIQYRGLFGAIAGFIEGGWTGMIDGWYGYHHQNEQGSGYAADQKSTQNAINGITNKVNSVIEKMNTQFTAVGKEFNNLEKRMENLNKKVDDGFLDIWTYNAELLVLLENERTLDFHDLNVKNLYEKVKSQLKNNAKEIGNGCFEFYHKCDNECMESVRNGTYDYPKYSEESKLNREKIDGVKLESMGVYQILAIYSTVASSLVLLVSLGAISFWMCSNGSLQCRICI</sequence>
<proteinExistence type="evidence at protein level"/>